<proteinExistence type="predicted"/>
<dbReference type="EMBL" id="CU329671">
    <property type="protein sequence ID" value="CCD31349.1"/>
    <property type="molecule type" value="Genomic_DNA"/>
</dbReference>
<dbReference type="RefSeq" id="XP_004001695.1">
    <property type="nucleotide sequence ID" value="XM_004001646.1"/>
</dbReference>
<dbReference type="PaxDb" id="4896-SPBPB21E7.10.1"/>
<dbReference type="EnsemblFungi" id="SPBPB21E7.10.1">
    <property type="protein sequence ID" value="SPBPB21E7.10.1:pep"/>
    <property type="gene ID" value="SPBPB21E7.10"/>
</dbReference>
<dbReference type="PomBase" id="SPBPB21E7.10"/>
<dbReference type="VEuPathDB" id="FungiDB:SPBPB21E7.10"/>
<dbReference type="HOGENOM" id="CLU_2528756_0_0_1"/>
<dbReference type="InParanoid" id="G2TRR8"/>
<dbReference type="PRO" id="PR:G2TRR8"/>
<dbReference type="Proteomes" id="UP000002485">
    <property type="component" value="Chromosome II"/>
</dbReference>
<name>YP3A_SCHPO</name>
<gene>
    <name type="ORF">SPBPB21E7.10</name>
</gene>
<protein>
    <recommendedName>
        <fullName>Uncharacterized protein PB21E7.10</fullName>
    </recommendedName>
</protein>
<accession>G2TRR8</accession>
<reference key="1">
    <citation type="journal article" date="2002" name="Nature">
        <title>The genome sequence of Schizosaccharomyces pombe.</title>
        <authorList>
            <person name="Wood V."/>
            <person name="Gwilliam R."/>
            <person name="Rajandream M.A."/>
            <person name="Lyne M.H."/>
            <person name="Lyne R."/>
            <person name="Stewart A."/>
            <person name="Sgouros J.G."/>
            <person name="Peat N."/>
            <person name="Hayles J."/>
            <person name="Baker S.G."/>
            <person name="Basham D."/>
            <person name="Bowman S."/>
            <person name="Brooks K."/>
            <person name="Brown D."/>
            <person name="Brown S."/>
            <person name="Chillingworth T."/>
            <person name="Churcher C.M."/>
            <person name="Collins M."/>
            <person name="Connor R."/>
            <person name="Cronin A."/>
            <person name="Davis P."/>
            <person name="Feltwell T."/>
            <person name="Fraser A."/>
            <person name="Gentles S."/>
            <person name="Goble A."/>
            <person name="Hamlin N."/>
            <person name="Harris D.E."/>
            <person name="Hidalgo J."/>
            <person name="Hodgson G."/>
            <person name="Holroyd S."/>
            <person name="Hornsby T."/>
            <person name="Howarth S."/>
            <person name="Huckle E.J."/>
            <person name="Hunt S."/>
            <person name="Jagels K."/>
            <person name="James K.D."/>
            <person name="Jones L."/>
            <person name="Jones M."/>
            <person name="Leather S."/>
            <person name="McDonald S."/>
            <person name="McLean J."/>
            <person name="Mooney P."/>
            <person name="Moule S."/>
            <person name="Mungall K.L."/>
            <person name="Murphy L.D."/>
            <person name="Niblett D."/>
            <person name="Odell C."/>
            <person name="Oliver K."/>
            <person name="O'Neil S."/>
            <person name="Pearson D."/>
            <person name="Quail M.A."/>
            <person name="Rabbinowitsch E."/>
            <person name="Rutherford K.M."/>
            <person name="Rutter S."/>
            <person name="Saunders D."/>
            <person name="Seeger K."/>
            <person name="Sharp S."/>
            <person name="Skelton J."/>
            <person name="Simmonds M.N."/>
            <person name="Squares R."/>
            <person name="Squares S."/>
            <person name="Stevens K."/>
            <person name="Taylor K."/>
            <person name="Taylor R.G."/>
            <person name="Tivey A."/>
            <person name="Walsh S.V."/>
            <person name="Warren T."/>
            <person name="Whitehead S."/>
            <person name="Woodward J.R."/>
            <person name="Volckaert G."/>
            <person name="Aert R."/>
            <person name="Robben J."/>
            <person name="Grymonprez B."/>
            <person name="Weltjens I."/>
            <person name="Vanstreels E."/>
            <person name="Rieger M."/>
            <person name="Schaefer M."/>
            <person name="Mueller-Auer S."/>
            <person name="Gabel C."/>
            <person name="Fuchs M."/>
            <person name="Duesterhoeft A."/>
            <person name="Fritzc C."/>
            <person name="Holzer E."/>
            <person name="Moestl D."/>
            <person name="Hilbert H."/>
            <person name="Borzym K."/>
            <person name="Langer I."/>
            <person name="Beck A."/>
            <person name="Lehrach H."/>
            <person name="Reinhardt R."/>
            <person name="Pohl T.M."/>
            <person name="Eger P."/>
            <person name="Zimmermann W."/>
            <person name="Wedler H."/>
            <person name="Wambutt R."/>
            <person name="Purnelle B."/>
            <person name="Goffeau A."/>
            <person name="Cadieu E."/>
            <person name="Dreano S."/>
            <person name="Gloux S."/>
            <person name="Lelaure V."/>
            <person name="Mottier S."/>
            <person name="Galibert F."/>
            <person name="Aves S.J."/>
            <person name="Xiang Z."/>
            <person name="Hunt C."/>
            <person name="Moore K."/>
            <person name="Hurst S.M."/>
            <person name="Lucas M."/>
            <person name="Rochet M."/>
            <person name="Gaillardin C."/>
            <person name="Tallada V.A."/>
            <person name="Garzon A."/>
            <person name="Thode G."/>
            <person name="Daga R.R."/>
            <person name="Cruzado L."/>
            <person name="Jimenez J."/>
            <person name="Sanchez M."/>
            <person name="del Rey F."/>
            <person name="Benito J."/>
            <person name="Dominguez A."/>
            <person name="Revuelta J.L."/>
            <person name="Moreno S."/>
            <person name="Armstrong J."/>
            <person name="Forsburg S.L."/>
            <person name="Cerutti L."/>
            <person name="Lowe T."/>
            <person name="McCombie W.R."/>
            <person name="Paulsen I."/>
            <person name="Potashkin J."/>
            <person name="Shpakovski G.V."/>
            <person name="Ussery D."/>
            <person name="Barrell B.G."/>
            <person name="Nurse P."/>
        </authorList>
    </citation>
    <scope>NUCLEOTIDE SEQUENCE [LARGE SCALE GENOMIC DNA]</scope>
    <source>
        <strain>972 / ATCC 24843</strain>
    </source>
</reference>
<reference key="2">
    <citation type="journal article" date="2011" name="Science">
        <title>Comparative functional genomics of the fission yeasts.</title>
        <authorList>
            <person name="Rhind N."/>
            <person name="Chen Z."/>
            <person name="Yassour M."/>
            <person name="Thompson D.A."/>
            <person name="Haas B.J."/>
            <person name="Habib N."/>
            <person name="Wapinski I."/>
            <person name="Roy S."/>
            <person name="Lin M.F."/>
            <person name="Heiman D.I."/>
            <person name="Young S.K."/>
            <person name="Furuya K."/>
            <person name="Guo Y."/>
            <person name="Pidoux A."/>
            <person name="Chen H.M."/>
            <person name="Robbertse B."/>
            <person name="Goldberg J.M."/>
            <person name="Aoki K."/>
            <person name="Bayne E.H."/>
            <person name="Berlin A.M."/>
            <person name="Desjardins C.A."/>
            <person name="Dobbs E."/>
            <person name="Dukaj L."/>
            <person name="Fan L."/>
            <person name="FitzGerald M.G."/>
            <person name="French C."/>
            <person name="Gujja S."/>
            <person name="Hansen K."/>
            <person name="Keifenheim D."/>
            <person name="Levin J.Z."/>
            <person name="Mosher R.A."/>
            <person name="Mueller C.A."/>
            <person name="Pfiffner J."/>
            <person name="Priest M."/>
            <person name="Russ C."/>
            <person name="Smialowska A."/>
            <person name="Swoboda P."/>
            <person name="Sykes S.M."/>
            <person name="Vaughn M."/>
            <person name="Vengrova S."/>
            <person name="Yoder R."/>
            <person name="Zeng Q."/>
            <person name="Allshire R."/>
            <person name="Baulcombe D."/>
            <person name="Birren B.W."/>
            <person name="Brown W."/>
            <person name="Ekwall K."/>
            <person name="Kellis M."/>
            <person name="Leatherwood J."/>
            <person name="Levin H."/>
            <person name="Margalit H."/>
            <person name="Martienssen R."/>
            <person name="Nieduszynski C.A."/>
            <person name="Spatafora J.W."/>
            <person name="Friedman N."/>
            <person name="Dalgaard J.Z."/>
            <person name="Baumann P."/>
            <person name="Niki H."/>
            <person name="Regev A."/>
            <person name="Nusbaum C."/>
        </authorList>
    </citation>
    <scope>IDENTIFICATION</scope>
</reference>
<feature type="chain" id="PRO_0000416660" description="Uncharacterized protein PB21E7.10">
    <location>
        <begin position="1"/>
        <end position="84"/>
    </location>
</feature>
<feature type="region of interest" description="Disordered" evidence="1">
    <location>
        <begin position="1"/>
        <end position="84"/>
    </location>
</feature>
<feature type="compositionally biased region" description="Low complexity" evidence="1">
    <location>
        <begin position="1"/>
        <end position="14"/>
    </location>
</feature>
<feature type="compositionally biased region" description="Gly residues" evidence="1">
    <location>
        <begin position="28"/>
        <end position="40"/>
    </location>
</feature>
<feature type="compositionally biased region" description="Basic and acidic residues" evidence="1">
    <location>
        <begin position="53"/>
        <end position="65"/>
    </location>
</feature>
<feature type="compositionally biased region" description="Basic and acidic residues" evidence="1">
    <location>
        <begin position="73"/>
        <end position="84"/>
    </location>
</feature>
<keyword id="KW-1185">Reference proteome</keyword>
<organism>
    <name type="scientific">Schizosaccharomyces pombe (strain 972 / ATCC 24843)</name>
    <name type="common">Fission yeast</name>
    <dbReference type="NCBI Taxonomy" id="284812"/>
    <lineage>
        <taxon>Eukaryota</taxon>
        <taxon>Fungi</taxon>
        <taxon>Dikarya</taxon>
        <taxon>Ascomycota</taxon>
        <taxon>Taphrinomycotina</taxon>
        <taxon>Schizosaccharomycetes</taxon>
        <taxon>Schizosaccharomycetales</taxon>
        <taxon>Schizosaccharomycetaceae</taxon>
        <taxon>Schizosaccharomyces</taxon>
    </lineage>
</organism>
<evidence type="ECO:0000256" key="1">
    <source>
        <dbReference type="SAM" id="MobiDB-lite"/>
    </source>
</evidence>
<sequence>MQKLNKSSSKGKNNIETEEAEDSAGRGSTYGFGPYGGGGFSSKSSGEEATTGDTKKLKGEVEEGTGKLLHSKKLVDKGERKESE</sequence>